<proteinExistence type="inferred from homology"/>
<gene>
    <name type="primary">talA</name>
    <name type="ORF">DDB_G0290481</name>
</gene>
<feature type="chain" id="PRO_0000219427" description="Talin-A">
    <location>
        <begin position="1"/>
        <end position="1279"/>
    </location>
</feature>
<feature type="domain" description="FERM" evidence="2">
    <location>
        <begin position="84"/>
        <end position="365"/>
    </location>
</feature>
<comment type="function">
    <text evidence="1">Actin-binding protein that may be involved in the control of cell motility and chemotaxis.</text>
</comment>
<comment type="subcellular location">
    <subcellularLocation>
        <location>Cytoplasm</location>
        <location>Cytoskeleton</location>
    </subcellularLocation>
    <subcellularLocation>
        <location evidence="1">Cytoplasm</location>
        <location evidence="1">Cell cortex</location>
    </subcellularLocation>
</comment>
<comment type="caution">
    <text evidence="3">This is a truncated TALA gene product. Strain AX4 has a stop codon in position 1280 which disrupts the gene and produces a truncated protein. On the other hand, strain AX2 produces a full length protein (AC P0CE95).</text>
</comment>
<reference key="1">
    <citation type="journal article" date="2005" name="Nature">
        <title>The genome of the social amoeba Dictyostelium discoideum.</title>
        <authorList>
            <person name="Eichinger L."/>
            <person name="Pachebat J.A."/>
            <person name="Gloeckner G."/>
            <person name="Rajandream M.A."/>
            <person name="Sucgang R."/>
            <person name="Berriman M."/>
            <person name="Song J."/>
            <person name="Olsen R."/>
            <person name="Szafranski K."/>
            <person name="Xu Q."/>
            <person name="Tunggal B."/>
            <person name="Kummerfeld S."/>
            <person name="Madera M."/>
            <person name="Konfortov B.A."/>
            <person name="Rivero F."/>
            <person name="Bankier A.T."/>
            <person name="Lehmann R."/>
            <person name="Hamlin N."/>
            <person name="Davies R."/>
            <person name="Gaudet P."/>
            <person name="Fey P."/>
            <person name="Pilcher K."/>
            <person name="Chen G."/>
            <person name="Saunders D."/>
            <person name="Sodergren E.J."/>
            <person name="Davis P."/>
            <person name="Kerhornou A."/>
            <person name="Nie X."/>
            <person name="Hall N."/>
            <person name="Anjard C."/>
            <person name="Hemphill L."/>
            <person name="Bason N."/>
            <person name="Farbrother P."/>
            <person name="Desany B."/>
            <person name="Just E."/>
            <person name="Morio T."/>
            <person name="Rost R."/>
            <person name="Churcher C.M."/>
            <person name="Cooper J."/>
            <person name="Haydock S."/>
            <person name="van Driessche N."/>
            <person name="Cronin A."/>
            <person name="Goodhead I."/>
            <person name="Muzny D.M."/>
            <person name="Mourier T."/>
            <person name="Pain A."/>
            <person name="Lu M."/>
            <person name="Harper D."/>
            <person name="Lindsay R."/>
            <person name="Hauser H."/>
            <person name="James K.D."/>
            <person name="Quiles M."/>
            <person name="Madan Babu M."/>
            <person name="Saito T."/>
            <person name="Buchrieser C."/>
            <person name="Wardroper A."/>
            <person name="Felder M."/>
            <person name="Thangavelu M."/>
            <person name="Johnson D."/>
            <person name="Knights A."/>
            <person name="Loulseged H."/>
            <person name="Mungall K.L."/>
            <person name="Oliver K."/>
            <person name="Price C."/>
            <person name="Quail M.A."/>
            <person name="Urushihara H."/>
            <person name="Hernandez J."/>
            <person name="Rabbinowitsch E."/>
            <person name="Steffen D."/>
            <person name="Sanders M."/>
            <person name="Ma J."/>
            <person name="Kohara Y."/>
            <person name="Sharp S."/>
            <person name="Simmonds M.N."/>
            <person name="Spiegler S."/>
            <person name="Tivey A."/>
            <person name="Sugano S."/>
            <person name="White B."/>
            <person name="Walker D."/>
            <person name="Woodward J.R."/>
            <person name="Winckler T."/>
            <person name="Tanaka Y."/>
            <person name="Shaulsky G."/>
            <person name="Schleicher M."/>
            <person name="Weinstock G.M."/>
            <person name="Rosenthal A."/>
            <person name="Cox E.C."/>
            <person name="Chisholm R.L."/>
            <person name="Gibbs R.A."/>
            <person name="Loomis W.F."/>
            <person name="Platzer M."/>
            <person name="Kay R.R."/>
            <person name="Williams J.G."/>
            <person name="Dear P.H."/>
            <person name="Noegel A.A."/>
            <person name="Barrell B.G."/>
            <person name="Kuspa A."/>
        </authorList>
    </citation>
    <scope>NUCLEOTIDE SEQUENCE [LARGE SCALE GENOMIC DNA]</scope>
    <source>
        <strain>AX4</strain>
    </source>
</reference>
<evidence type="ECO:0000250" key="1"/>
<evidence type="ECO:0000255" key="2">
    <source>
        <dbReference type="PROSITE-ProRule" id="PRU00084"/>
    </source>
</evidence>
<evidence type="ECO:0000305" key="3"/>
<name>TALA_DICDI</name>
<keyword id="KW-0009">Actin-binding</keyword>
<keyword id="KW-0963">Cytoplasm</keyword>
<keyword id="KW-0206">Cytoskeleton</keyword>
<keyword id="KW-1185">Reference proteome</keyword>
<organism>
    <name type="scientific">Dictyostelium discoideum</name>
    <name type="common">Social amoeba</name>
    <dbReference type="NCBI Taxonomy" id="44689"/>
    <lineage>
        <taxon>Eukaryota</taxon>
        <taxon>Amoebozoa</taxon>
        <taxon>Evosea</taxon>
        <taxon>Eumycetozoa</taxon>
        <taxon>Dictyostelia</taxon>
        <taxon>Dictyosteliales</taxon>
        <taxon>Dictyosteliaceae</taxon>
        <taxon>Dictyostelium</taxon>
    </lineage>
</organism>
<accession>P0CE94</accession>
<accession>P54633</accession>
<accession>Q54FX1</accession>
<dbReference type="EMBL" id="AAFI02000164">
    <property type="protein sequence ID" value="EAL62101.2"/>
    <property type="molecule type" value="Genomic_DNA"/>
</dbReference>
<dbReference type="RefSeq" id="XP_635646.2">
    <property type="nucleotide sequence ID" value="XM_630554.3"/>
</dbReference>
<dbReference type="SMR" id="P0CE94"/>
<dbReference type="FunCoup" id="P0CE94">
    <property type="interactions" value="1"/>
</dbReference>
<dbReference type="STRING" id="44689.P0CE94"/>
<dbReference type="GeneID" id="8627718"/>
<dbReference type="KEGG" id="ddi:DDB_G0290481"/>
<dbReference type="dictyBase" id="DDB_G0290481">
    <property type="gene designation" value="talA"/>
</dbReference>
<dbReference type="VEuPathDB" id="AmoebaDB:DDB_G0290481"/>
<dbReference type="InParanoid" id="P0CE94"/>
<dbReference type="PhylomeDB" id="P0CE94"/>
<dbReference type="PRO" id="PR:P0CE94"/>
<dbReference type="Proteomes" id="UP000002195">
    <property type="component" value="Chromosome 5"/>
</dbReference>
<dbReference type="GO" id="GO:0005938">
    <property type="term" value="C:cell cortex"/>
    <property type="evidence" value="ECO:0007669"/>
    <property type="project" value="UniProtKB-SubCell"/>
</dbReference>
<dbReference type="GO" id="GO:0031254">
    <property type="term" value="C:cell trailing edge"/>
    <property type="evidence" value="ECO:0000314"/>
    <property type="project" value="dictyBase"/>
</dbReference>
<dbReference type="GO" id="GO:0032154">
    <property type="term" value="C:cleavage furrow"/>
    <property type="evidence" value="ECO:0000314"/>
    <property type="project" value="dictyBase"/>
</dbReference>
<dbReference type="GO" id="GO:0005856">
    <property type="term" value="C:cytoskeleton"/>
    <property type="evidence" value="ECO:0007669"/>
    <property type="project" value="UniProtKB-SubCell"/>
</dbReference>
<dbReference type="GO" id="GO:0032433">
    <property type="term" value="C:filopodium tip"/>
    <property type="evidence" value="ECO:0000314"/>
    <property type="project" value="dictyBase"/>
</dbReference>
<dbReference type="GO" id="GO:0016020">
    <property type="term" value="C:membrane"/>
    <property type="evidence" value="ECO:0000314"/>
    <property type="project" value="dictyBase"/>
</dbReference>
<dbReference type="GO" id="GO:0031143">
    <property type="term" value="C:pseudopodium"/>
    <property type="evidence" value="ECO:0000314"/>
    <property type="project" value="dictyBase"/>
</dbReference>
<dbReference type="GO" id="GO:0003779">
    <property type="term" value="F:actin binding"/>
    <property type="evidence" value="ECO:0007669"/>
    <property type="project" value="UniProtKB-KW"/>
</dbReference>
<dbReference type="GO" id="GO:0005547">
    <property type="term" value="F:phosphatidylinositol-3,4,5-trisphosphate binding"/>
    <property type="evidence" value="ECO:0000314"/>
    <property type="project" value="dictyBase"/>
</dbReference>
<dbReference type="GO" id="GO:0005546">
    <property type="term" value="F:phosphatidylinositol-4,5-bisphosphate binding"/>
    <property type="evidence" value="ECO:0000314"/>
    <property type="project" value="dictyBase"/>
</dbReference>
<dbReference type="GO" id="GO:0000916">
    <property type="term" value="P:actomyosin contractile ring contraction"/>
    <property type="evidence" value="ECO:0000315"/>
    <property type="project" value="dictyBase"/>
</dbReference>
<dbReference type="GO" id="GO:0000902">
    <property type="term" value="P:cell morphogenesis"/>
    <property type="evidence" value="ECO:0000315"/>
    <property type="project" value="dictyBase"/>
</dbReference>
<dbReference type="GO" id="GO:0098609">
    <property type="term" value="P:cell-cell adhesion"/>
    <property type="evidence" value="ECO:0000315"/>
    <property type="project" value="dictyBase"/>
</dbReference>
<dbReference type="GO" id="GO:0031589">
    <property type="term" value="P:cell-substrate adhesion"/>
    <property type="evidence" value="ECO:0000315"/>
    <property type="project" value="dictyBase"/>
</dbReference>
<dbReference type="GO" id="GO:0036090">
    <property type="term" value="P:cleavage furrow ingression"/>
    <property type="evidence" value="ECO:0000315"/>
    <property type="project" value="dictyBase"/>
</dbReference>
<dbReference type="GO" id="GO:0000281">
    <property type="term" value="P:mitotic cytokinesis"/>
    <property type="evidence" value="ECO:0000315"/>
    <property type="project" value="dictyBase"/>
</dbReference>
<dbReference type="GO" id="GO:0006909">
    <property type="term" value="P:phagocytosis"/>
    <property type="evidence" value="ECO:0000315"/>
    <property type="project" value="dictyBase"/>
</dbReference>
<dbReference type="GO" id="GO:0030587">
    <property type="term" value="P:sorocarp development"/>
    <property type="evidence" value="ECO:0000316"/>
    <property type="project" value="dictyBase"/>
</dbReference>
<dbReference type="GO" id="GO:0034461">
    <property type="term" value="P:uropod retraction"/>
    <property type="evidence" value="ECO:0000315"/>
    <property type="project" value="dictyBase"/>
</dbReference>
<dbReference type="CDD" id="cd14473">
    <property type="entry name" value="FERM_B-lobe"/>
    <property type="match status" value="1"/>
</dbReference>
<dbReference type="CDD" id="cd10569">
    <property type="entry name" value="FERM_C_Talin"/>
    <property type="match status" value="1"/>
</dbReference>
<dbReference type="CDD" id="cd17089">
    <property type="entry name" value="FERM_F0_TLN"/>
    <property type="match status" value="1"/>
</dbReference>
<dbReference type="CDD" id="cd17090">
    <property type="entry name" value="FERM_F1_TLN"/>
    <property type="match status" value="1"/>
</dbReference>
<dbReference type="FunFam" id="1.20.80.10:FF:000007">
    <property type="entry name" value="Talin 2"/>
    <property type="match status" value="1"/>
</dbReference>
<dbReference type="FunFam" id="2.30.29.30:FF:000028">
    <property type="entry name" value="Talin 2"/>
    <property type="match status" value="1"/>
</dbReference>
<dbReference type="Gene3D" id="1.20.80.10">
    <property type="match status" value="1"/>
</dbReference>
<dbReference type="Gene3D" id="1.20.120.230">
    <property type="entry name" value="Alpha-catenin/vinculin-like"/>
    <property type="match status" value="2"/>
</dbReference>
<dbReference type="Gene3D" id="3.10.20.90">
    <property type="entry name" value="Phosphatidylinositol 3-kinase Catalytic Subunit, Chain A, domain 1"/>
    <property type="match status" value="2"/>
</dbReference>
<dbReference type="Gene3D" id="2.30.29.30">
    <property type="entry name" value="Pleckstrin-homology domain (PH domain)/Phosphotyrosine-binding domain (PTB)"/>
    <property type="match status" value="1"/>
</dbReference>
<dbReference type="Gene3D" id="1.20.1420.10">
    <property type="entry name" value="Talin, central domain"/>
    <property type="match status" value="2"/>
</dbReference>
<dbReference type="InterPro" id="IPR019749">
    <property type="entry name" value="Band_41_domain"/>
</dbReference>
<dbReference type="InterPro" id="IPR014352">
    <property type="entry name" value="FERM/acyl-CoA-bd_prot_sf"/>
</dbReference>
<dbReference type="InterPro" id="IPR035963">
    <property type="entry name" value="FERM_2"/>
</dbReference>
<dbReference type="InterPro" id="IPR019748">
    <property type="entry name" value="FERM_central"/>
</dbReference>
<dbReference type="InterPro" id="IPR019747">
    <property type="entry name" value="FERM_CS"/>
</dbReference>
<dbReference type="InterPro" id="IPR000299">
    <property type="entry name" value="FERM_domain"/>
</dbReference>
<dbReference type="InterPro" id="IPR032425">
    <property type="entry name" value="FERM_f0"/>
</dbReference>
<dbReference type="InterPro" id="IPR002404">
    <property type="entry name" value="IRS_PTB"/>
</dbReference>
<dbReference type="InterPro" id="IPR011993">
    <property type="entry name" value="PH-like_dom_sf"/>
</dbReference>
<dbReference type="InterPro" id="IPR049108">
    <property type="entry name" value="Talin_R4"/>
</dbReference>
<dbReference type="InterPro" id="IPR054060">
    <property type="entry name" value="TLN1-like_RS"/>
</dbReference>
<dbReference type="InterPro" id="IPR029071">
    <property type="entry name" value="Ubiquitin-like_domsf"/>
</dbReference>
<dbReference type="PANTHER" id="PTHR19981:SF1">
    <property type="entry name" value="RHEA, ISOFORM B"/>
    <property type="match status" value="1"/>
</dbReference>
<dbReference type="PANTHER" id="PTHR19981">
    <property type="entry name" value="TALIN"/>
    <property type="match status" value="1"/>
</dbReference>
<dbReference type="Pfam" id="PF16511">
    <property type="entry name" value="FERM_f0"/>
    <property type="match status" value="1"/>
</dbReference>
<dbReference type="Pfam" id="PF00373">
    <property type="entry name" value="FERM_M"/>
    <property type="match status" value="1"/>
</dbReference>
<dbReference type="Pfam" id="PF02174">
    <property type="entry name" value="IRS"/>
    <property type="match status" value="1"/>
</dbReference>
<dbReference type="Pfam" id="PF21692">
    <property type="entry name" value="Talin_R4"/>
    <property type="match status" value="1"/>
</dbReference>
<dbReference type="Pfam" id="PF21865">
    <property type="entry name" value="TLN1-like_RS"/>
    <property type="match status" value="1"/>
</dbReference>
<dbReference type="SMART" id="SM00295">
    <property type="entry name" value="B41"/>
    <property type="match status" value="1"/>
</dbReference>
<dbReference type="SMART" id="SM01244">
    <property type="entry name" value="IRS"/>
    <property type="match status" value="1"/>
</dbReference>
<dbReference type="SUPFAM" id="SSF50729">
    <property type="entry name" value="PH domain-like"/>
    <property type="match status" value="1"/>
</dbReference>
<dbReference type="SUPFAM" id="SSF47031">
    <property type="entry name" value="Second domain of FERM"/>
    <property type="match status" value="1"/>
</dbReference>
<dbReference type="SUPFAM" id="SSF54236">
    <property type="entry name" value="Ubiquitin-like"/>
    <property type="match status" value="1"/>
</dbReference>
<dbReference type="PROSITE" id="PS00660">
    <property type="entry name" value="FERM_1"/>
    <property type="match status" value="1"/>
</dbReference>
<dbReference type="PROSITE" id="PS00661">
    <property type="entry name" value="FERM_2"/>
    <property type="match status" value="1"/>
</dbReference>
<dbReference type="PROSITE" id="PS50057">
    <property type="entry name" value="FERM_3"/>
    <property type="match status" value="1"/>
</dbReference>
<protein>
    <recommendedName>
        <fullName>Talin-A</fullName>
    </recommendedName>
    <alternativeName>
        <fullName>Filopodin</fullName>
    </alternativeName>
</protein>
<sequence length="1279" mass="139484">MSISLKINIVGANTVKTLRFAPDMCIQECCTHIFEKTNEGGPDHGLYQAHIEGKQSARWLAMEKTLQFYDINSDQQLDYKKKHRPQKFKLLDGTIKTQLVDESQNVSEIVNSICKKMGIKNPEEYSLMNSAGAWLNNTQILSEQGISENDITVLMKKFFFNDANIDRNDPVQLHLLFVQCRDGIIEGKYPTQREESLALSALQCQVQLGDYNPTKHVPGFLTLKDYLPLQWLKSKGVEKDIFKEHKKLVSMTEVNAKYRYVQLCRSLKTYGMTSFDVKIREYGKKKMVDHILGITREQMLLMLTETKEVIMTHPLKHIKRWAATDKSFTLDFGDHETEYLILQTPNPEQISQLIGGYIEIIMKARKDSSKVIEKEDTAMGVEEVMAVKKGSVANSSSYMGYGAGGGGANQLQPSQQIPITDLKSALRATDLLIGELGGFRSSTGATPQNFTRSFTTLTPQQFKHQLISHTNAMAIAAQGLFQDMTTPPPTGGIAAFQQAITKRAQIIMAELNTVGTAAKNAGYFPDMASFSDEIIGVATKLSESMARLLAIGSTIQGTDCDEKSQKAAQTEIFNVQSLVTLMMAACDNEYVTDSSSKLLIECAKNVSAAIADMLVVGNSKVEFIDDELLLGQIQNTLKSTSLTSDELLSTTENLASTSCHPESRKQITNITQSALNQSNALLTAFKSGEIPEQDYNLLNARVSDIIESVNLINYAMDCSEREYKISITSNGVEVGEGEILAGTNLTEEFATVANDLTNAIMTMRSNLKNPDTVMESYKMVAGHANRLITCTKAVASRADTQSQQRLFNSTNAVFESVANLSNHCRSYIKNPEQEAHTFQIVETAGHLQFLTQNMSTDAGKIACITSLRDYSKEMIAQVSSLISTSRTSSQYLPDANGITLLKGAKDVSDALSKLMVGIKKVVLDPKSEATQMELLTLAQKQSLPPMNLVSTCKRFAPKISDPNQKQRLIFSSDAAAQSVQKLMKAGEAYKRICGHIEIEEALEVFDSTIADLETTEIAIAGGFLDAVSGTTREGAAELLMVAIKDLNKVNNELVTDIRVNPARLGDLVKSATESASSVAISAKTLICATTGKQVQKKLMGITKQLMIDMEQLIRASRSVASNPNDAASELLLDAASNDVSISTAALVGSTANVDCKELDEASADISNLLSLKMGSLESILSQPTEEFAFYVEEIASSTKALNAASQQVVAMARNKNLKGLGASAKITASALSTLVSHAQNAIVLTENEATKNAILASTVALGGQIIGLLDFSKARIANY</sequence>